<protein>
    <recommendedName>
        <fullName evidence="1">6,7-dimethyl-8-ribityllumazine synthase</fullName>
        <shortName evidence="1">DMRL synthase</shortName>
        <shortName evidence="1">LS</shortName>
        <shortName evidence="1">Lumazine synthase</shortName>
        <ecNumber evidence="1">2.5.1.78</ecNumber>
    </recommendedName>
</protein>
<name>RISB_MICAN</name>
<gene>
    <name evidence="1" type="primary">ribH</name>
    <name type="ordered locus">MAE_32220</name>
</gene>
<organism>
    <name type="scientific">Microcystis aeruginosa (strain NIES-843 / IAM M-2473)</name>
    <dbReference type="NCBI Taxonomy" id="449447"/>
    <lineage>
        <taxon>Bacteria</taxon>
        <taxon>Bacillati</taxon>
        <taxon>Cyanobacteriota</taxon>
        <taxon>Cyanophyceae</taxon>
        <taxon>Oscillatoriophycideae</taxon>
        <taxon>Chroococcales</taxon>
        <taxon>Microcystaceae</taxon>
        <taxon>Microcystis</taxon>
    </lineage>
</organism>
<keyword id="KW-0686">Riboflavin biosynthesis</keyword>
<keyword id="KW-0808">Transferase</keyword>
<reference key="1">
    <citation type="journal article" date="2007" name="DNA Res.">
        <title>Complete genomic structure of the bloom-forming toxic cyanobacterium Microcystis aeruginosa NIES-843.</title>
        <authorList>
            <person name="Kaneko T."/>
            <person name="Nakajima N."/>
            <person name="Okamoto S."/>
            <person name="Suzuki I."/>
            <person name="Tanabe Y."/>
            <person name="Tamaoki M."/>
            <person name="Nakamura Y."/>
            <person name="Kasai F."/>
            <person name="Watanabe A."/>
            <person name="Kawashima K."/>
            <person name="Kishida Y."/>
            <person name="Ono A."/>
            <person name="Shimizu Y."/>
            <person name="Takahashi C."/>
            <person name="Minami C."/>
            <person name="Fujishiro T."/>
            <person name="Kohara M."/>
            <person name="Katoh M."/>
            <person name="Nakazaki N."/>
            <person name="Nakayama S."/>
            <person name="Yamada M."/>
            <person name="Tabata S."/>
            <person name="Watanabe M.M."/>
        </authorList>
    </citation>
    <scope>NUCLEOTIDE SEQUENCE [LARGE SCALE GENOMIC DNA]</scope>
    <source>
        <strain>NIES-843 / IAM M-247</strain>
    </source>
</reference>
<dbReference type="EC" id="2.5.1.78" evidence="1"/>
<dbReference type="EMBL" id="AP009552">
    <property type="protein sequence ID" value="BAG03044.1"/>
    <property type="molecule type" value="Genomic_DNA"/>
</dbReference>
<dbReference type="RefSeq" id="WP_002799220.1">
    <property type="nucleotide sequence ID" value="NC_010296.1"/>
</dbReference>
<dbReference type="SMR" id="B0JLM0"/>
<dbReference type="STRING" id="449447.MAE_32220"/>
<dbReference type="PaxDb" id="449447-MAE_32220"/>
<dbReference type="EnsemblBacteria" id="BAG03044">
    <property type="protein sequence ID" value="BAG03044"/>
    <property type="gene ID" value="MAE_32220"/>
</dbReference>
<dbReference type="KEGG" id="mar:MAE_32220"/>
<dbReference type="eggNOG" id="COG0054">
    <property type="taxonomic scope" value="Bacteria"/>
</dbReference>
<dbReference type="HOGENOM" id="CLU_089358_1_0_3"/>
<dbReference type="BioCyc" id="MAER449447:MAE_RS13945-MONOMER"/>
<dbReference type="UniPathway" id="UPA00275">
    <property type="reaction ID" value="UER00404"/>
</dbReference>
<dbReference type="Proteomes" id="UP000001510">
    <property type="component" value="Chromosome"/>
</dbReference>
<dbReference type="GO" id="GO:0005829">
    <property type="term" value="C:cytosol"/>
    <property type="evidence" value="ECO:0007669"/>
    <property type="project" value="TreeGrafter"/>
</dbReference>
<dbReference type="GO" id="GO:0009349">
    <property type="term" value="C:riboflavin synthase complex"/>
    <property type="evidence" value="ECO:0007669"/>
    <property type="project" value="InterPro"/>
</dbReference>
<dbReference type="GO" id="GO:0000906">
    <property type="term" value="F:6,7-dimethyl-8-ribityllumazine synthase activity"/>
    <property type="evidence" value="ECO:0007669"/>
    <property type="project" value="UniProtKB-UniRule"/>
</dbReference>
<dbReference type="GO" id="GO:0009231">
    <property type="term" value="P:riboflavin biosynthetic process"/>
    <property type="evidence" value="ECO:0007669"/>
    <property type="project" value="UniProtKB-UniRule"/>
</dbReference>
<dbReference type="CDD" id="cd09209">
    <property type="entry name" value="Lumazine_synthase-I"/>
    <property type="match status" value="1"/>
</dbReference>
<dbReference type="FunFam" id="3.40.50.960:FF:000001">
    <property type="entry name" value="6,7-dimethyl-8-ribityllumazine synthase"/>
    <property type="match status" value="1"/>
</dbReference>
<dbReference type="Gene3D" id="3.40.50.960">
    <property type="entry name" value="Lumazine/riboflavin synthase"/>
    <property type="match status" value="1"/>
</dbReference>
<dbReference type="HAMAP" id="MF_00178">
    <property type="entry name" value="Lumazine_synth"/>
    <property type="match status" value="1"/>
</dbReference>
<dbReference type="InterPro" id="IPR034964">
    <property type="entry name" value="LS"/>
</dbReference>
<dbReference type="InterPro" id="IPR002180">
    <property type="entry name" value="LS/RS"/>
</dbReference>
<dbReference type="InterPro" id="IPR036467">
    <property type="entry name" value="LS/RS_sf"/>
</dbReference>
<dbReference type="NCBIfam" id="TIGR00114">
    <property type="entry name" value="lumazine-synth"/>
    <property type="match status" value="1"/>
</dbReference>
<dbReference type="PANTHER" id="PTHR21058:SF0">
    <property type="entry name" value="6,7-DIMETHYL-8-RIBITYLLUMAZINE SYNTHASE"/>
    <property type="match status" value="1"/>
</dbReference>
<dbReference type="PANTHER" id="PTHR21058">
    <property type="entry name" value="6,7-DIMETHYL-8-RIBITYLLUMAZINE SYNTHASE DMRL SYNTHASE LUMAZINE SYNTHASE"/>
    <property type="match status" value="1"/>
</dbReference>
<dbReference type="Pfam" id="PF00885">
    <property type="entry name" value="DMRL_synthase"/>
    <property type="match status" value="1"/>
</dbReference>
<dbReference type="SUPFAM" id="SSF52121">
    <property type="entry name" value="Lumazine synthase"/>
    <property type="match status" value="1"/>
</dbReference>
<proteinExistence type="inferred from homology"/>
<feature type="chain" id="PRO_1000077239" description="6,7-dimethyl-8-ribityllumazine synthase">
    <location>
        <begin position="1"/>
        <end position="181"/>
    </location>
</feature>
<feature type="active site" description="Proton donor" evidence="1">
    <location>
        <position position="94"/>
    </location>
</feature>
<feature type="binding site" evidence="1">
    <location>
        <position position="24"/>
    </location>
    <ligand>
        <name>5-amino-6-(D-ribitylamino)uracil</name>
        <dbReference type="ChEBI" id="CHEBI:15934"/>
    </ligand>
</feature>
<feature type="binding site" evidence="1">
    <location>
        <begin position="62"/>
        <end position="64"/>
    </location>
    <ligand>
        <name>5-amino-6-(D-ribitylamino)uracil</name>
        <dbReference type="ChEBI" id="CHEBI:15934"/>
    </ligand>
</feature>
<feature type="binding site" evidence="1">
    <location>
        <begin position="86"/>
        <end position="88"/>
    </location>
    <ligand>
        <name>5-amino-6-(D-ribitylamino)uracil</name>
        <dbReference type="ChEBI" id="CHEBI:15934"/>
    </ligand>
</feature>
<feature type="binding site" evidence="1">
    <location>
        <begin position="91"/>
        <end position="92"/>
    </location>
    <ligand>
        <name>(2S)-2-hydroxy-3-oxobutyl phosphate</name>
        <dbReference type="ChEBI" id="CHEBI:58830"/>
    </ligand>
</feature>
<feature type="binding site" evidence="1">
    <location>
        <position position="119"/>
    </location>
    <ligand>
        <name>5-amino-6-(D-ribitylamino)uracil</name>
        <dbReference type="ChEBI" id="CHEBI:15934"/>
    </ligand>
</feature>
<feature type="binding site" evidence="1">
    <location>
        <position position="133"/>
    </location>
    <ligand>
        <name>(2S)-2-hydroxy-3-oxobutyl phosphate</name>
        <dbReference type="ChEBI" id="CHEBI:58830"/>
    </ligand>
</feature>
<evidence type="ECO:0000255" key="1">
    <source>
        <dbReference type="HAMAP-Rule" id="MF_00178"/>
    </source>
</evidence>
<sequence length="181" mass="19839">MTVFEGNFTEDISSLRFAIVIGRFNDLVTDKLLSGCQDCLKRHGVDVNPDGTQVDYIWVPGSFEVPMVARQVALSHRYDAVICLGAIIRGQTPHFDYVAAEAAKGIAAAAFQTGVPVVFGILTTDTLQQALERAGIKSNLGWNYGLSALEMASLMRQLRPRNEDKPLELLENNPQQALMEG</sequence>
<accession>B0JLM0</accession>
<comment type="function">
    <text evidence="1">Catalyzes the formation of 6,7-dimethyl-8-ribityllumazine by condensation of 5-amino-6-(D-ribitylamino)uracil with 3,4-dihydroxy-2-butanone 4-phosphate. This is the penultimate step in the biosynthesis of riboflavin.</text>
</comment>
<comment type="catalytic activity">
    <reaction evidence="1">
        <text>(2S)-2-hydroxy-3-oxobutyl phosphate + 5-amino-6-(D-ribitylamino)uracil = 6,7-dimethyl-8-(1-D-ribityl)lumazine + phosphate + 2 H2O + H(+)</text>
        <dbReference type="Rhea" id="RHEA:26152"/>
        <dbReference type="ChEBI" id="CHEBI:15377"/>
        <dbReference type="ChEBI" id="CHEBI:15378"/>
        <dbReference type="ChEBI" id="CHEBI:15934"/>
        <dbReference type="ChEBI" id="CHEBI:43474"/>
        <dbReference type="ChEBI" id="CHEBI:58201"/>
        <dbReference type="ChEBI" id="CHEBI:58830"/>
        <dbReference type="EC" id="2.5.1.78"/>
    </reaction>
</comment>
<comment type="pathway">
    <text evidence="1">Cofactor biosynthesis; riboflavin biosynthesis; riboflavin from 2-hydroxy-3-oxobutyl phosphate and 5-amino-6-(D-ribitylamino)uracil: step 1/2.</text>
</comment>
<comment type="similarity">
    <text evidence="1">Belongs to the DMRL synthase family.</text>
</comment>